<accession>Q6CSB8</accession>
<proteinExistence type="inferred from homology"/>
<keyword id="KW-0175">Coiled coil</keyword>
<keyword id="KW-0472">Membrane</keyword>
<keyword id="KW-0496">Mitochondrion</keyword>
<keyword id="KW-0999">Mitochondrion inner membrane</keyword>
<keyword id="KW-1185">Reference proteome</keyword>
<keyword id="KW-0809">Transit peptide</keyword>
<keyword id="KW-0812">Transmembrane</keyword>
<keyword id="KW-1133">Transmembrane helix</keyword>
<feature type="transit peptide" description="Mitochondrion" evidence="2">
    <location>
        <begin position="1"/>
        <end position="12"/>
    </location>
</feature>
<feature type="chain" id="PRO_0000406656" description="MICOS complex subunit MIC60">
    <location>
        <begin position="13"/>
        <end position="535"/>
    </location>
</feature>
<feature type="topological domain" description="Mitochondrial matrix" evidence="2">
    <location>
        <begin position="13"/>
        <end position="26"/>
    </location>
</feature>
<feature type="transmembrane region" description="Helical" evidence="2">
    <location>
        <begin position="27"/>
        <end position="49"/>
    </location>
</feature>
<feature type="topological domain" description="Mitochondrial intermembrane" evidence="2">
    <location>
        <begin position="50"/>
        <end position="535"/>
    </location>
</feature>
<feature type="region of interest" description="Disordered" evidence="3">
    <location>
        <begin position="106"/>
        <end position="136"/>
    </location>
</feature>
<feature type="coiled-coil region" evidence="2">
    <location>
        <begin position="191"/>
        <end position="342"/>
    </location>
</feature>
<feature type="compositionally biased region" description="Polar residues" evidence="3">
    <location>
        <begin position="107"/>
        <end position="119"/>
    </location>
</feature>
<feature type="compositionally biased region" description="Low complexity" evidence="3">
    <location>
        <begin position="120"/>
        <end position="136"/>
    </location>
</feature>
<dbReference type="EMBL" id="CR382124">
    <property type="protein sequence ID" value="CAH00267.1"/>
    <property type="molecule type" value="Genomic_DNA"/>
</dbReference>
<dbReference type="RefSeq" id="XP_453171.1">
    <property type="nucleotide sequence ID" value="XM_453171.1"/>
</dbReference>
<dbReference type="SMR" id="Q6CSB8"/>
<dbReference type="FunCoup" id="Q6CSB8">
    <property type="interactions" value="225"/>
</dbReference>
<dbReference type="STRING" id="284590.Q6CSB8"/>
<dbReference type="PaxDb" id="284590-Q6CSB8"/>
<dbReference type="KEGG" id="kla:KLLA0_D02310g"/>
<dbReference type="eggNOG" id="KOG1854">
    <property type="taxonomic scope" value="Eukaryota"/>
</dbReference>
<dbReference type="HOGENOM" id="CLU_008024_2_0_1"/>
<dbReference type="InParanoid" id="Q6CSB8"/>
<dbReference type="OMA" id="DYATDAY"/>
<dbReference type="Proteomes" id="UP000000598">
    <property type="component" value="Chromosome D"/>
</dbReference>
<dbReference type="GO" id="GO:0061617">
    <property type="term" value="C:MICOS complex"/>
    <property type="evidence" value="ECO:0007669"/>
    <property type="project" value="TreeGrafter"/>
</dbReference>
<dbReference type="GO" id="GO:0042407">
    <property type="term" value="P:cristae formation"/>
    <property type="evidence" value="ECO:0007669"/>
    <property type="project" value="TreeGrafter"/>
</dbReference>
<dbReference type="InterPro" id="IPR019133">
    <property type="entry name" value="MIC60"/>
</dbReference>
<dbReference type="PANTHER" id="PTHR15415:SF7">
    <property type="entry name" value="MICOS COMPLEX SUBUNIT MIC60"/>
    <property type="match status" value="1"/>
</dbReference>
<dbReference type="PANTHER" id="PTHR15415">
    <property type="entry name" value="MITOFILIN"/>
    <property type="match status" value="1"/>
</dbReference>
<dbReference type="Pfam" id="PF09731">
    <property type="entry name" value="Mitofilin"/>
    <property type="match status" value="1"/>
</dbReference>
<reference key="1">
    <citation type="journal article" date="2004" name="Nature">
        <title>Genome evolution in yeasts.</title>
        <authorList>
            <person name="Dujon B."/>
            <person name="Sherman D."/>
            <person name="Fischer G."/>
            <person name="Durrens P."/>
            <person name="Casaregola S."/>
            <person name="Lafontaine I."/>
            <person name="de Montigny J."/>
            <person name="Marck C."/>
            <person name="Neuveglise C."/>
            <person name="Talla E."/>
            <person name="Goffard N."/>
            <person name="Frangeul L."/>
            <person name="Aigle M."/>
            <person name="Anthouard V."/>
            <person name="Babour A."/>
            <person name="Barbe V."/>
            <person name="Barnay S."/>
            <person name="Blanchin S."/>
            <person name="Beckerich J.-M."/>
            <person name="Beyne E."/>
            <person name="Bleykasten C."/>
            <person name="Boisrame A."/>
            <person name="Boyer J."/>
            <person name="Cattolico L."/>
            <person name="Confanioleri F."/>
            <person name="de Daruvar A."/>
            <person name="Despons L."/>
            <person name="Fabre E."/>
            <person name="Fairhead C."/>
            <person name="Ferry-Dumazet H."/>
            <person name="Groppi A."/>
            <person name="Hantraye F."/>
            <person name="Hennequin C."/>
            <person name="Jauniaux N."/>
            <person name="Joyet P."/>
            <person name="Kachouri R."/>
            <person name="Kerrest A."/>
            <person name="Koszul R."/>
            <person name="Lemaire M."/>
            <person name="Lesur I."/>
            <person name="Ma L."/>
            <person name="Muller H."/>
            <person name="Nicaud J.-M."/>
            <person name="Nikolski M."/>
            <person name="Oztas S."/>
            <person name="Ozier-Kalogeropoulos O."/>
            <person name="Pellenz S."/>
            <person name="Potier S."/>
            <person name="Richard G.-F."/>
            <person name="Straub M.-L."/>
            <person name="Suleau A."/>
            <person name="Swennen D."/>
            <person name="Tekaia F."/>
            <person name="Wesolowski-Louvel M."/>
            <person name="Westhof E."/>
            <person name="Wirth B."/>
            <person name="Zeniou-Meyer M."/>
            <person name="Zivanovic Y."/>
            <person name="Bolotin-Fukuhara M."/>
            <person name="Thierry A."/>
            <person name="Bouchier C."/>
            <person name="Caudron B."/>
            <person name="Scarpelli C."/>
            <person name="Gaillardin C."/>
            <person name="Weissenbach J."/>
            <person name="Wincker P."/>
            <person name="Souciet J.-L."/>
        </authorList>
    </citation>
    <scope>NUCLEOTIDE SEQUENCE [LARGE SCALE GENOMIC DNA]</scope>
    <source>
        <strain>ATCC 8585 / CBS 2359 / DSM 70799 / NBRC 1267 / NRRL Y-1140 / WM37</strain>
    </source>
</reference>
<gene>
    <name type="primary">MIC60</name>
    <name type="ordered locus">KLLA0D02310g</name>
</gene>
<comment type="function">
    <text evidence="1">Component of the MICOS complex, a large protein complex of the mitochondrial inner membrane that plays crucial roles in the maintenance of crista junctions, inner membrane architecture, and formation of contact sites to the outer membrane. Plays a role in keeping cristae membranes connected to the inner boundary membrane. Also promotes protein import via the mitochondrial intermembrane space assembly (MIA) pathway (By similarity).</text>
</comment>
<comment type="subunit">
    <text evidence="1">Component of the mitochondrial contact site and cristae organizing system (MICOS) complex.</text>
</comment>
<comment type="subcellular location">
    <subcellularLocation>
        <location evidence="1">Mitochondrion inner membrane</location>
        <topology evidence="1">Single-pass membrane protein</topology>
    </subcellularLocation>
</comment>
<comment type="similarity">
    <text evidence="4">Belongs to the MICOS complex subunit Mic60 family.</text>
</comment>
<sequence>MFRASKALGQRFASTNVPVKTARPFRNFLWKLGAATTVFYVGGVALSTYNYQFAELFTDNVPLAEELVQLVESYNDGTLNAPQLSLDEIRKKFGSITRKVQSVPHLGSTSSTVTESQSIASGSGSTAAAATTGTDSNSVVLSSVPPVGSVLLRLPHLKLDDDSNSFNNKSFVESFNKQVDSLNEKEFILPENAVESFLESYHGLSSQLNELNRDLADQLNSQLGQLSAELKQSVESDKVKEIESNKLQLMQQFEKDLSNLKVEFEQKFDSQLQSSLKANEQAMLAKHKNELAMLSIKQVQEFNKIISNKIENERNGRLKNLDELNGSVKTVSDSLAALEETLLRSECVNQLTNLVSSIKFKLNLDNTPSLDISKDLQKLTTLVNILPGKPNKCDAKEPQLIDVVVNELNSLTSAKENKQILSNEQLLNRWGLLQDKIREASLLPPNAGFLGHVSAKFFSLFLFNKSGISNENDIDSVISRVTENIKLNRLDKAVEDVVQLQGWSRLEADDWLQAARSKLELETLVDVVDHEIKTL</sequence>
<name>MIC60_KLULA</name>
<organism>
    <name type="scientific">Kluyveromyces lactis (strain ATCC 8585 / CBS 2359 / DSM 70799 / NBRC 1267 / NRRL Y-1140 / WM37)</name>
    <name type="common">Yeast</name>
    <name type="synonym">Candida sphaerica</name>
    <dbReference type="NCBI Taxonomy" id="284590"/>
    <lineage>
        <taxon>Eukaryota</taxon>
        <taxon>Fungi</taxon>
        <taxon>Dikarya</taxon>
        <taxon>Ascomycota</taxon>
        <taxon>Saccharomycotina</taxon>
        <taxon>Saccharomycetes</taxon>
        <taxon>Saccharomycetales</taxon>
        <taxon>Saccharomycetaceae</taxon>
        <taxon>Kluyveromyces</taxon>
    </lineage>
</organism>
<protein>
    <recommendedName>
        <fullName>MICOS complex subunit MIC60</fullName>
    </recommendedName>
    <alternativeName>
        <fullName>Mitofilin</fullName>
    </alternativeName>
</protein>
<evidence type="ECO:0000250" key="1"/>
<evidence type="ECO:0000255" key="2"/>
<evidence type="ECO:0000256" key="3">
    <source>
        <dbReference type="SAM" id="MobiDB-lite"/>
    </source>
</evidence>
<evidence type="ECO:0000305" key="4"/>